<dbReference type="EC" id="1.6.5.2" evidence="1"/>
<dbReference type="EMBL" id="AL513382">
    <property type="protein sequence ID" value="CAD08155.1"/>
    <property type="molecule type" value="Genomic_DNA"/>
</dbReference>
<dbReference type="EMBL" id="AE014613">
    <property type="protein sequence ID" value="AAO71514.1"/>
    <property type="molecule type" value="Genomic_DNA"/>
</dbReference>
<dbReference type="RefSeq" id="NP_458442.1">
    <property type="nucleotide sequence ID" value="NC_003198.1"/>
</dbReference>
<dbReference type="RefSeq" id="WP_000081820.1">
    <property type="nucleotide sequence ID" value="NZ_WSUR01000001.1"/>
</dbReference>
<dbReference type="SMR" id="P65511"/>
<dbReference type="STRING" id="220341.gene:17588168"/>
<dbReference type="KEGG" id="stt:t4047"/>
<dbReference type="KEGG" id="sty:STY4340"/>
<dbReference type="PATRIC" id="fig|220341.7.peg.4435"/>
<dbReference type="eggNOG" id="COG2249">
    <property type="taxonomic scope" value="Bacteria"/>
</dbReference>
<dbReference type="HOGENOM" id="CLU_058643_0_1_6"/>
<dbReference type="OMA" id="RYPMSDI"/>
<dbReference type="OrthoDB" id="9798454at2"/>
<dbReference type="Proteomes" id="UP000000541">
    <property type="component" value="Chromosome"/>
</dbReference>
<dbReference type="Proteomes" id="UP000002670">
    <property type="component" value="Chromosome"/>
</dbReference>
<dbReference type="GO" id="GO:0005886">
    <property type="term" value="C:plasma membrane"/>
    <property type="evidence" value="ECO:0007669"/>
    <property type="project" value="UniProtKB-SubCell"/>
</dbReference>
<dbReference type="GO" id="GO:0009055">
    <property type="term" value="F:electron transfer activity"/>
    <property type="evidence" value="ECO:0007669"/>
    <property type="project" value="TreeGrafter"/>
</dbReference>
<dbReference type="GO" id="GO:0010181">
    <property type="term" value="F:FMN binding"/>
    <property type="evidence" value="ECO:0007669"/>
    <property type="project" value="TreeGrafter"/>
</dbReference>
<dbReference type="GO" id="GO:0050136">
    <property type="term" value="F:NADH:ubiquinone reductase (non-electrogenic) activity"/>
    <property type="evidence" value="ECO:0007669"/>
    <property type="project" value="RHEA"/>
</dbReference>
<dbReference type="GO" id="GO:0008753">
    <property type="term" value="F:NADPH dehydrogenase (quinone) activity"/>
    <property type="evidence" value="ECO:0007669"/>
    <property type="project" value="RHEA"/>
</dbReference>
<dbReference type="GO" id="GO:1901381">
    <property type="term" value="P:positive regulation of potassium ion transmembrane transport"/>
    <property type="evidence" value="ECO:0007669"/>
    <property type="project" value="UniProtKB-UniRule"/>
</dbReference>
<dbReference type="GO" id="GO:0006813">
    <property type="term" value="P:potassium ion transport"/>
    <property type="evidence" value="ECO:0007669"/>
    <property type="project" value="InterPro"/>
</dbReference>
<dbReference type="FunFam" id="3.40.50.360:FF:000013">
    <property type="entry name" value="Glutathione-regulated potassium-efflux system ancillary protein KefG"/>
    <property type="match status" value="1"/>
</dbReference>
<dbReference type="Gene3D" id="3.40.50.360">
    <property type="match status" value="1"/>
</dbReference>
<dbReference type="HAMAP" id="MF_01415">
    <property type="entry name" value="K_H_efflux_KefG"/>
    <property type="match status" value="1"/>
</dbReference>
<dbReference type="InterPro" id="IPR003680">
    <property type="entry name" value="Flavodoxin_fold"/>
</dbReference>
<dbReference type="InterPro" id="IPR029039">
    <property type="entry name" value="Flavoprotein-like_sf"/>
</dbReference>
<dbReference type="InterPro" id="IPR023947">
    <property type="entry name" value="K_H_efflux_KefG"/>
</dbReference>
<dbReference type="InterPro" id="IPR046980">
    <property type="entry name" value="KefG/KefF"/>
</dbReference>
<dbReference type="NCBIfam" id="NF003430">
    <property type="entry name" value="PRK04930.1"/>
    <property type="match status" value="1"/>
</dbReference>
<dbReference type="PANTHER" id="PTHR47307">
    <property type="entry name" value="GLUTATHIONE-REGULATED POTASSIUM-EFFLUX SYSTEM ANCILLARY PROTEIN KEFG"/>
    <property type="match status" value="1"/>
</dbReference>
<dbReference type="PANTHER" id="PTHR47307:SF1">
    <property type="entry name" value="GLUTATHIONE-REGULATED POTASSIUM-EFFLUX SYSTEM ANCILLARY PROTEIN KEFG"/>
    <property type="match status" value="1"/>
</dbReference>
<dbReference type="Pfam" id="PF02525">
    <property type="entry name" value="Flavodoxin_2"/>
    <property type="match status" value="1"/>
</dbReference>
<dbReference type="SUPFAM" id="SSF52218">
    <property type="entry name" value="Flavoproteins"/>
    <property type="match status" value="1"/>
</dbReference>
<comment type="function">
    <text evidence="1">Regulatory subunit of a potassium efflux system that confers protection against electrophiles. Required for full activity of KefB.</text>
</comment>
<comment type="catalytic activity">
    <reaction evidence="1">
        <text>a quinone + NADH + H(+) = a quinol + NAD(+)</text>
        <dbReference type="Rhea" id="RHEA:46160"/>
        <dbReference type="ChEBI" id="CHEBI:15378"/>
        <dbReference type="ChEBI" id="CHEBI:24646"/>
        <dbReference type="ChEBI" id="CHEBI:57540"/>
        <dbReference type="ChEBI" id="CHEBI:57945"/>
        <dbReference type="ChEBI" id="CHEBI:132124"/>
        <dbReference type="EC" id="1.6.5.2"/>
    </reaction>
</comment>
<comment type="catalytic activity">
    <reaction evidence="1">
        <text>a quinone + NADPH + H(+) = a quinol + NADP(+)</text>
        <dbReference type="Rhea" id="RHEA:46164"/>
        <dbReference type="ChEBI" id="CHEBI:15378"/>
        <dbReference type="ChEBI" id="CHEBI:24646"/>
        <dbReference type="ChEBI" id="CHEBI:57783"/>
        <dbReference type="ChEBI" id="CHEBI:58349"/>
        <dbReference type="ChEBI" id="CHEBI:132124"/>
        <dbReference type="EC" id="1.6.5.2"/>
    </reaction>
</comment>
<comment type="subunit">
    <text evidence="1">Interacts with KefB.</text>
</comment>
<comment type="subcellular location">
    <subcellularLocation>
        <location evidence="1">Cell inner membrane</location>
        <topology evidence="1">Peripheral membrane protein</topology>
        <orientation evidence="1">Cytoplasmic side</orientation>
    </subcellularLocation>
</comment>
<comment type="similarity">
    <text evidence="1">Belongs to the NAD(P)H dehydrogenase (quinone) family. KefG subfamily.</text>
</comment>
<gene>
    <name evidence="1" type="primary">kefG</name>
    <name type="ordered locus">STY4340</name>
    <name type="ordered locus">t4047</name>
</gene>
<protein>
    <recommendedName>
        <fullName evidence="1">Glutathione-regulated potassium-efflux system ancillary protein KefG</fullName>
    </recommendedName>
    <alternativeName>
        <fullName evidence="1">Putative quinone oxidoreductase KefG</fullName>
        <ecNumber evidence="1">1.6.5.2</ecNumber>
    </alternativeName>
</protein>
<feature type="chain" id="PRO_0000071647" description="Glutathione-regulated potassium-efflux system ancillary protein KefG">
    <location>
        <begin position="1"/>
        <end position="183"/>
    </location>
</feature>
<evidence type="ECO:0000255" key="1">
    <source>
        <dbReference type="HAMAP-Rule" id="MF_01415"/>
    </source>
</evidence>
<proteinExistence type="inferred from homology"/>
<organism>
    <name type="scientific">Salmonella typhi</name>
    <dbReference type="NCBI Taxonomy" id="90370"/>
    <lineage>
        <taxon>Bacteria</taxon>
        <taxon>Pseudomonadati</taxon>
        <taxon>Pseudomonadota</taxon>
        <taxon>Gammaproteobacteria</taxon>
        <taxon>Enterobacterales</taxon>
        <taxon>Enterobacteriaceae</taxon>
        <taxon>Salmonella</taxon>
    </lineage>
</organism>
<accession>P65511</accession>
<accession>Q8XGW1</accession>
<sequence>MSQPAKVLLLYAHPESQDSVANRVLLKPAIQHNNVTVHDLYARYPDFFIDTPYEQALLREHDVIVFQHPLYTYSCPALLKEWLDRVLSRGFASGPGGNQLVGKYWRSVITTGEPESAYRYDALNRYPMSDVLRPFELTAAMCRMHWMPPIIVYWARRQSPQTLASHAKAYGEWLANPVSAGGY</sequence>
<name>KEFG_SALTI</name>
<reference key="1">
    <citation type="journal article" date="2001" name="Nature">
        <title>Complete genome sequence of a multiple drug resistant Salmonella enterica serovar Typhi CT18.</title>
        <authorList>
            <person name="Parkhill J."/>
            <person name="Dougan G."/>
            <person name="James K.D."/>
            <person name="Thomson N.R."/>
            <person name="Pickard D."/>
            <person name="Wain J."/>
            <person name="Churcher C.M."/>
            <person name="Mungall K.L."/>
            <person name="Bentley S.D."/>
            <person name="Holden M.T.G."/>
            <person name="Sebaihia M."/>
            <person name="Baker S."/>
            <person name="Basham D."/>
            <person name="Brooks K."/>
            <person name="Chillingworth T."/>
            <person name="Connerton P."/>
            <person name="Cronin A."/>
            <person name="Davis P."/>
            <person name="Davies R.M."/>
            <person name="Dowd L."/>
            <person name="White N."/>
            <person name="Farrar J."/>
            <person name="Feltwell T."/>
            <person name="Hamlin N."/>
            <person name="Haque A."/>
            <person name="Hien T.T."/>
            <person name="Holroyd S."/>
            <person name="Jagels K."/>
            <person name="Krogh A."/>
            <person name="Larsen T.S."/>
            <person name="Leather S."/>
            <person name="Moule S."/>
            <person name="O'Gaora P."/>
            <person name="Parry C."/>
            <person name="Quail M.A."/>
            <person name="Rutherford K.M."/>
            <person name="Simmonds M."/>
            <person name="Skelton J."/>
            <person name="Stevens K."/>
            <person name="Whitehead S."/>
            <person name="Barrell B.G."/>
        </authorList>
    </citation>
    <scope>NUCLEOTIDE SEQUENCE [LARGE SCALE GENOMIC DNA]</scope>
    <source>
        <strain>CT18</strain>
    </source>
</reference>
<reference key="2">
    <citation type="journal article" date="2003" name="J. Bacteriol.">
        <title>Comparative genomics of Salmonella enterica serovar Typhi strains Ty2 and CT18.</title>
        <authorList>
            <person name="Deng W."/>
            <person name="Liou S.-R."/>
            <person name="Plunkett G. III"/>
            <person name="Mayhew G.F."/>
            <person name="Rose D.J."/>
            <person name="Burland V."/>
            <person name="Kodoyianni V."/>
            <person name="Schwartz D.C."/>
            <person name="Blattner F.R."/>
        </authorList>
    </citation>
    <scope>NUCLEOTIDE SEQUENCE [LARGE SCALE GENOMIC DNA]</scope>
    <source>
        <strain>ATCC 700931 / Ty2</strain>
    </source>
</reference>
<keyword id="KW-0997">Cell inner membrane</keyword>
<keyword id="KW-1003">Cell membrane</keyword>
<keyword id="KW-0472">Membrane</keyword>
<keyword id="KW-0520">NAD</keyword>
<keyword id="KW-0560">Oxidoreductase</keyword>